<accession>Q3AMJ0</accession>
<keyword id="KW-0067">ATP-binding</keyword>
<keyword id="KW-0963">Cytoplasm</keyword>
<keyword id="KW-0418">Kinase</keyword>
<keyword id="KW-0436">Ligase</keyword>
<keyword id="KW-0511">Multifunctional enzyme</keyword>
<keyword id="KW-0547">Nucleotide-binding</keyword>
<keyword id="KW-0566">Pantothenate biosynthesis</keyword>
<keyword id="KW-0808">Transferase</keyword>
<name>PANCY_SYNSC</name>
<organism>
    <name type="scientific">Synechococcus sp. (strain CC9605)</name>
    <dbReference type="NCBI Taxonomy" id="110662"/>
    <lineage>
        <taxon>Bacteria</taxon>
        <taxon>Bacillati</taxon>
        <taxon>Cyanobacteriota</taxon>
        <taxon>Cyanophyceae</taxon>
        <taxon>Synechococcales</taxon>
        <taxon>Synechococcaceae</taxon>
        <taxon>Synechococcus</taxon>
    </lineage>
</organism>
<feature type="chain" id="PRO_0000239801" description="Bifunctional pantoate ligase/cytidylate kinase">
    <location>
        <begin position="1"/>
        <end position="480"/>
    </location>
</feature>
<feature type="region of interest" description="Pantoate--beta-alanine ligase" evidence="1">
    <location>
        <begin position="1"/>
        <end position="243"/>
    </location>
</feature>
<feature type="region of interest" description="Cytidylate kinase" evidence="1">
    <location>
        <begin position="244"/>
        <end position="480"/>
    </location>
</feature>
<feature type="active site" description="Proton donor" evidence="1">
    <location>
        <position position="11"/>
    </location>
</feature>
<feature type="binding site" evidence="1">
    <location>
        <begin position="4"/>
        <end position="11"/>
    </location>
    <ligand>
        <name>ATP</name>
        <dbReference type="ChEBI" id="CHEBI:30616"/>
    </ligand>
</feature>
<feature type="binding site" evidence="1">
    <location>
        <position position="34"/>
    </location>
    <ligand>
        <name>(R)-pantoate</name>
        <dbReference type="ChEBI" id="CHEBI:15980"/>
    </ligand>
</feature>
<feature type="binding site" evidence="1">
    <location>
        <position position="34"/>
    </location>
    <ligand>
        <name>beta-alanine</name>
        <dbReference type="ChEBI" id="CHEBI:57966"/>
    </ligand>
</feature>
<feature type="binding site" evidence="1">
    <location>
        <begin position="123"/>
        <end position="126"/>
    </location>
    <ligand>
        <name>ATP</name>
        <dbReference type="ChEBI" id="CHEBI:30616"/>
    </ligand>
</feature>
<feature type="binding site" evidence="1">
    <location>
        <position position="129"/>
    </location>
    <ligand>
        <name>(R)-pantoate</name>
        <dbReference type="ChEBI" id="CHEBI:15980"/>
    </ligand>
</feature>
<feature type="binding site" evidence="1">
    <location>
        <position position="152"/>
    </location>
    <ligand>
        <name>ATP</name>
        <dbReference type="ChEBI" id="CHEBI:30616"/>
    </ligand>
</feature>
<feature type="binding site" evidence="1">
    <location>
        <begin position="160"/>
        <end position="163"/>
    </location>
    <ligand>
        <name>ATP</name>
        <dbReference type="ChEBI" id="CHEBI:30616"/>
    </ligand>
</feature>
<protein>
    <recommendedName>
        <fullName evidence="1">Bifunctional pantoate ligase/cytidylate kinase</fullName>
    </recommendedName>
    <domain>
        <recommendedName>
            <fullName evidence="1">Pantothenate synthetase</fullName>
            <shortName evidence="1">PS</shortName>
            <ecNumber evidence="1">6.3.2.1</ecNumber>
        </recommendedName>
        <alternativeName>
            <fullName evidence="1">Pantoate--beta-alanine ligase</fullName>
        </alternativeName>
        <alternativeName>
            <fullName evidence="1">Pantoate-activating enzyme</fullName>
        </alternativeName>
    </domain>
    <domain>
        <recommendedName>
            <fullName evidence="1">Cytidylate kinase</fullName>
            <shortName evidence="1">CK</shortName>
            <ecNumber evidence="1">2.7.4.25</ecNumber>
        </recommendedName>
        <alternativeName>
            <fullName evidence="1">Cytidine monophosphate kinase</fullName>
            <shortName evidence="1">CMP kinase</shortName>
        </alternativeName>
    </domain>
</protein>
<dbReference type="EC" id="6.3.2.1" evidence="1"/>
<dbReference type="EC" id="2.7.4.25" evidence="1"/>
<dbReference type="EMBL" id="CP000110">
    <property type="protein sequence ID" value="ABB34192.1"/>
    <property type="molecule type" value="Genomic_DNA"/>
</dbReference>
<dbReference type="SMR" id="Q3AMJ0"/>
<dbReference type="STRING" id="110662.Syncc9605_0416"/>
<dbReference type="KEGG" id="syd:Syncc9605_0416"/>
<dbReference type="eggNOG" id="COG0283">
    <property type="taxonomic scope" value="Bacteria"/>
</dbReference>
<dbReference type="eggNOG" id="COG0414">
    <property type="taxonomic scope" value="Bacteria"/>
</dbReference>
<dbReference type="HOGENOM" id="CLU_037427_0_0_3"/>
<dbReference type="UniPathway" id="UPA00028">
    <property type="reaction ID" value="UER00005"/>
</dbReference>
<dbReference type="GO" id="GO:0005829">
    <property type="term" value="C:cytosol"/>
    <property type="evidence" value="ECO:0007669"/>
    <property type="project" value="TreeGrafter"/>
</dbReference>
<dbReference type="GO" id="GO:0005524">
    <property type="term" value="F:ATP binding"/>
    <property type="evidence" value="ECO:0007669"/>
    <property type="project" value="UniProtKB-UniRule"/>
</dbReference>
<dbReference type="GO" id="GO:0036430">
    <property type="term" value="F:CMP kinase activity"/>
    <property type="evidence" value="ECO:0007669"/>
    <property type="project" value="RHEA"/>
</dbReference>
<dbReference type="GO" id="GO:0036431">
    <property type="term" value="F:dCMP kinase activity"/>
    <property type="evidence" value="ECO:0007669"/>
    <property type="project" value="RHEA"/>
</dbReference>
<dbReference type="GO" id="GO:0004592">
    <property type="term" value="F:pantoate-beta-alanine ligase activity"/>
    <property type="evidence" value="ECO:0007669"/>
    <property type="project" value="UniProtKB-UniRule"/>
</dbReference>
<dbReference type="GO" id="GO:0015949">
    <property type="term" value="P:nucleobase-containing small molecule interconversion"/>
    <property type="evidence" value="ECO:0007669"/>
    <property type="project" value="TreeGrafter"/>
</dbReference>
<dbReference type="GO" id="GO:0015940">
    <property type="term" value="P:pantothenate biosynthetic process"/>
    <property type="evidence" value="ECO:0007669"/>
    <property type="project" value="UniProtKB-UniRule"/>
</dbReference>
<dbReference type="GO" id="GO:0006220">
    <property type="term" value="P:pyrimidine nucleotide metabolic process"/>
    <property type="evidence" value="ECO:0007669"/>
    <property type="project" value="UniProtKB-UniRule"/>
</dbReference>
<dbReference type="CDD" id="cd02020">
    <property type="entry name" value="CMPK"/>
    <property type="match status" value="1"/>
</dbReference>
<dbReference type="Gene3D" id="3.40.50.620">
    <property type="entry name" value="HUPs"/>
    <property type="match status" value="1"/>
</dbReference>
<dbReference type="Gene3D" id="3.40.50.300">
    <property type="entry name" value="P-loop containing nucleotide triphosphate hydrolases"/>
    <property type="match status" value="1"/>
</dbReference>
<dbReference type="Gene3D" id="3.30.1300.10">
    <property type="entry name" value="Pantoate-beta-alanine ligase, C-terminal domain"/>
    <property type="match status" value="1"/>
</dbReference>
<dbReference type="HAMAP" id="MF_00238">
    <property type="entry name" value="Cytidyl_kinase_type1"/>
    <property type="match status" value="1"/>
</dbReference>
<dbReference type="HAMAP" id="MF_00158">
    <property type="entry name" value="PanC"/>
    <property type="match status" value="1"/>
</dbReference>
<dbReference type="HAMAP" id="MF_01349">
    <property type="entry name" value="PanCY"/>
    <property type="match status" value="1"/>
</dbReference>
<dbReference type="InterPro" id="IPR003136">
    <property type="entry name" value="Cytidylate_kin"/>
</dbReference>
<dbReference type="InterPro" id="IPR011994">
    <property type="entry name" value="Cytidylate_kinase_dom"/>
</dbReference>
<dbReference type="InterPro" id="IPR027417">
    <property type="entry name" value="P-loop_NTPase"/>
</dbReference>
<dbReference type="InterPro" id="IPR003721">
    <property type="entry name" value="Pantoate_ligase"/>
</dbReference>
<dbReference type="InterPro" id="IPR024894">
    <property type="entry name" value="Pantoate_ligase/cytidylate_kin"/>
</dbReference>
<dbReference type="InterPro" id="IPR042176">
    <property type="entry name" value="Pantoate_ligase_C"/>
</dbReference>
<dbReference type="InterPro" id="IPR014729">
    <property type="entry name" value="Rossmann-like_a/b/a_fold"/>
</dbReference>
<dbReference type="NCBIfam" id="TIGR00017">
    <property type="entry name" value="cmk"/>
    <property type="match status" value="1"/>
</dbReference>
<dbReference type="NCBIfam" id="TIGR00018">
    <property type="entry name" value="panC"/>
    <property type="match status" value="1"/>
</dbReference>
<dbReference type="NCBIfam" id="NF010004">
    <property type="entry name" value="PRK13477.1"/>
    <property type="match status" value="1"/>
</dbReference>
<dbReference type="PANTHER" id="PTHR21299:SF2">
    <property type="entry name" value="CYTIDYLATE KINASE"/>
    <property type="match status" value="1"/>
</dbReference>
<dbReference type="PANTHER" id="PTHR21299">
    <property type="entry name" value="CYTIDYLATE KINASE/PANTOATE-BETA-ALANINE LIGASE"/>
    <property type="match status" value="1"/>
</dbReference>
<dbReference type="Pfam" id="PF02224">
    <property type="entry name" value="Cytidylate_kin"/>
    <property type="match status" value="1"/>
</dbReference>
<dbReference type="Pfam" id="PF02569">
    <property type="entry name" value="Pantoate_ligase"/>
    <property type="match status" value="1"/>
</dbReference>
<dbReference type="SUPFAM" id="SSF52374">
    <property type="entry name" value="Nucleotidylyl transferase"/>
    <property type="match status" value="1"/>
</dbReference>
<dbReference type="SUPFAM" id="SSF52540">
    <property type="entry name" value="P-loop containing nucleoside triphosphate hydrolases"/>
    <property type="match status" value="1"/>
</dbReference>
<evidence type="ECO:0000255" key="1">
    <source>
        <dbReference type="HAMAP-Rule" id="MF_01349"/>
    </source>
</evidence>
<sequence>MPTMGGLHQGHGELIRRASEQGPVLVSVFVNPLQFGPAEDFDRYPRTLEADRGLAECCGAHALWAPSVDAIYPSGLPSAVSRSAPAGLQTHLCGASRPGHFDGVVTVVARLLQLVEPSCLWLGEKDWQQLVILRRLVVDLDLGVVVKGVPTVRESDGLALSSRNQYLFPADRARAAALPAALRHADPSDPESSVRQSLAKAGLEVEYVERVDPRTLQPCGPETAISLLAAAVRCGTTRLIDHVFLMTRQPLVAIDGPAGAGKSTVTRAFAERMGLVYLDTGAMYRSVTWLVQQNGVDHQDAVSIAPLLNDLDLQLKSLPGGGQQVLVNGQDVSDAIRSPEVTASVSAVAAHRCVRQALTAQQKAMGAKGGLVAEGRDIGTAVFPDADLKVFLTATVGERARRRALDLEQRGFPVPERSELEAQIAERDHLDSTREEAPLVQADDALELVTDGMSIEAVIDALVGQFRSRVGEEAWPTPAG</sequence>
<proteinExistence type="inferred from homology"/>
<reference key="1">
    <citation type="submission" date="2005-07" db="EMBL/GenBank/DDBJ databases">
        <title>Complete sequence of Synechococcus sp. CC9605.</title>
        <authorList>
            <consortium name="US DOE Joint Genome Institute"/>
            <person name="Copeland A."/>
            <person name="Lucas S."/>
            <person name="Lapidus A."/>
            <person name="Barry K."/>
            <person name="Detter J.C."/>
            <person name="Glavina T."/>
            <person name="Hammon N."/>
            <person name="Israni S."/>
            <person name="Pitluck S."/>
            <person name="Schmutz J."/>
            <person name="Martinez M."/>
            <person name="Larimer F."/>
            <person name="Land M."/>
            <person name="Kyrpides N."/>
            <person name="Ivanova N."/>
            <person name="Richardson P."/>
        </authorList>
    </citation>
    <scope>NUCLEOTIDE SEQUENCE [LARGE SCALE GENOMIC DNA]</scope>
    <source>
        <strain>CC9605</strain>
    </source>
</reference>
<comment type="function">
    <text evidence="1">Catalyzes the condensation of pantoate with beta-alanine in an ATP-dependent reaction via a pantoyl-adenylate intermediate.</text>
</comment>
<comment type="function">
    <text evidence="1">Catalyzes the transfer of a phosphate group from ATP to either CMP or dCMP to form CDP or dCDP and ADP, respectively.</text>
</comment>
<comment type="catalytic activity">
    <reaction evidence="1">
        <text>(R)-pantoate + beta-alanine + ATP = (R)-pantothenate + AMP + diphosphate + H(+)</text>
        <dbReference type="Rhea" id="RHEA:10912"/>
        <dbReference type="ChEBI" id="CHEBI:15378"/>
        <dbReference type="ChEBI" id="CHEBI:15980"/>
        <dbReference type="ChEBI" id="CHEBI:29032"/>
        <dbReference type="ChEBI" id="CHEBI:30616"/>
        <dbReference type="ChEBI" id="CHEBI:33019"/>
        <dbReference type="ChEBI" id="CHEBI:57966"/>
        <dbReference type="ChEBI" id="CHEBI:456215"/>
        <dbReference type="EC" id="6.3.2.1"/>
    </reaction>
</comment>
<comment type="catalytic activity">
    <reaction evidence="1">
        <text>CMP + ATP = CDP + ADP</text>
        <dbReference type="Rhea" id="RHEA:11600"/>
        <dbReference type="ChEBI" id="CHEBI:30616"/>
        <dbReference type="ChEBI" id="CHEBI:58069"/>
        <dbReference type="ChEBI" id="CHEBI:60377"/>
        <dbReference type="ChEBI" id="CHEBI:456216"/>
        <dbReference type="EC" id="2.7.4.25"/>
    </reaction>
</comment>
<comment type="catalytic activity">
    <reaction evidence="1">
        <text>dCMP + ATP = dCDP + ADP</text>
        <dbReference type="Rhea" id="RHEA:25094"/>
        <dbReference type="ChEBI" id="CHEBI:30616"/>
        <dbReference type="ChEBI" id="CHEBI:57566"/>
        <dbReference type="ChEBI" id="CHEBI:58593"/>
        <dbReference type="ChEBI" id="CHEBI:456216"/>
        <dbReference type="EC" id="2.7.4.25"/>
    </reaction>
</comment>
<comment type="pathway">
    <text evidence="1">Cofactor biosynthesis; (R)-pantothenate biosynthesis; (R)-pantothenate from (R)-pantoate and beta-alanine: step 1/1.</text>
</comment>
<comment type="subcellular location">
    <subcellularLocation>
        <location evidence="1">Cytoplasm</location>
    </subcellularLocation>
</comment>
<comment type="similarity">
    <text evidence="1">In the N-terminal section; belongs to the pantothenate synthetase family.</text>
</comment>
<comment type="similarity">
    <text evidence="1">In the C-terminal section; belongs to the cytidylate kinase family. Type 1 subfamily.</text>
</comment>
<gene>
    <name evidence="1" type="primary">panC/cmk</name>
    <name type="ordered locus">Syncc9605_0416</name>
</gene>